<dbReference type="EC" id="4.2.1.9" evidence="1"/>
<dbReference type="EMBL" id="AP009384">
    <property type="protein sequence ID" value="BAF89528.1"/>
    <property type="molecule type" value="Genomic_DNA"/>
</dbReference>
<dbReference type="RefSeq" id="WP_012172053.1">
    <property type="nucleotide sequence ID" value="NC_009937.1"/>
</dbReference>
<dbReference type="SMR" id="A8IES7"/>
<dbReference type="STRING" id="438753.AZC_3530"/>
<dbReference type="KEGG" id="azc:AZC_3530"/>
<dbReference type="eggNOG" id="COG0129">
    <property type="taxonomic scope" value="Bacteria"/>
</dbReference>
<dbReference type="HOGENOM" id="CLU_014271_4_2_5"/>
<dbReference type="UniPathway" id="UPA00047">
    <property type="reaction ID" value="UER00057"/>
</dbReference>
<dbReference type="UniPathway" id="UPA00049">
    <property type="reaction ID" value="UER00061"/>
</dbReference>
<dbReference type="Proteomes" id="UP000000270">
    <property type="component" value="Chromosome"/>
</dbReference>
<dbReference type="GO" id="GO:0005829">
    <property type="term" value="C:cytosol"/>
    <property type="evidence" value="ECO:0007669"/>
    <property type="project" value="TreeGrafter"/>
</dbReference>
<dbReference type="GO" id="GO:0051537">
    <property type="term" value="F:2 iron, 2 sulfur cluster binding"/>
    <property type="evidence" value="ECO:0007669"/>
    <property type="project" value="UniProtKB-UniRule"/>
</dbReference>
<dbReference type="GO" id="GO:0004160">
    <property type="term" value="F:dihydroxy-acid dehydratase activity"/>
    <property type="evidence" value="ECO:0007669"/>
    <property type="project" value="UniProtKB-UniRule"/>
</dbReference>
<dbReference type="GO" id="GO:0000287">
    <property type="term" value="F:magnesium ion binding"/>
    <property type="evidence" value="ECO:0007669"/>
    <property type="project" value="UniProtKB-UniRule"/>
</dbReference>
<dbReference type="GO" id="GO:0009097">
    <property type="term" value="P:isoleucine biosynthetic process"/>
    <property type="evidence" value="ECO:0007669"/>
    <property type="project" value="UniProtKB-UniRule"/>
</dbReference>
<dbReference type="GO" id="GO:0009099">
    <property type="term" value="P:L-valine biosynthetic process"/>
    <property type="evidence" value="ECO:0007669"/>
    <property type="project" value="UniProtKB-UniRule"/>
</dbReference>
<dbReference type="FunFam" id="3.50.30.80:FF:000001">
    <property type="entry name" value="Dihydroxy-acid dehydratase"/>
    <property type="match status" value="1"/>
</dbReference>
<dbReference type="Gene3D" id="3.50.30.80">
    <property type="entry name" value="IlvD/EDD C-terminal domain-like"/>
    <property type="match status" value="1"/>
</dbReference>
<dbReference type="HAMAP" id="MF_00012">
    <property type="entry name" value="IlvD"/>
    <property type="match status" value="1"/>
</dbReference>
<dbReference type="InterPro" id="IPR042096">
    <property type="entry name" value="Dihydro-acid_dehy_C"/>
</dbReference>
<dbReference type="InterPro" id="IPR004404">
    <property type="entry name" value="DihydroxyA_deHydtase"/>
</dbReference>
<dbReference type="InterPro" id="IPR020558">
    <property type="entry name" value="DiOHA_6PGluconate_deHydtase_CS"/>
</dbReference>
<dbReference type="InterPro" id="IPR056740">
    <property type="entry name" value="ILV_EDD_C"/>
</dbReference>
<dbReference type="InterPro" id="IPR000581">
    <property type="entry name" value="ILV_EDD_N"/>
</dbReference>
<dbReference type="InterPro" id="IPR037237">
    <property type="entry name" value="IlvD/EDD_N"/>
</dbReference>
<dbReference type="NCBIfam" id="TIGR00110">
    <property type="entry name" value="ilvD"/>
    <property type="match status" value="1"/>
</dbReference>
<dbReference type="NCBIfam" id="NF009103">
    <property type="entry name" value="PRK12448.1"/>
    <property type="match status" value="1"/>
</dbReference>
<dbReference type="PANTHER" id="PTHR43661">
    <property type="entry name" value="D-XYLONATE DEHYDRATASE"/>
    <property type="match status" value="1"/>
</dbReference>
<dbReference type="PANTHER" id="PTHR43661:SF3">
    <property type="entry name" value="D-XYLONATE DEHYDRATASE YAGF-RELATED"/>
    <property type="match status" value="1"/>
</dbReference>
<dbReference type="Pfam" id="PF24877">
    <property type="entry name" value="ILV_EDD_C"/>
    <property type="match status" value="1"/>
</dbReference>
<dbReference type="Pfam" id="PF00920">
    <property type="entry name" value="ILVD_EDD_N"/>
    <property type="match status" value="1"/>
</dbReference>
<dbReference type="SUPFAM" id="SSF143975">
    <property type="entry name" value="IlvD/EDD N-terminal domain-like"/>
    <property type="match status" value="1"/>
</dbReference>
<dbReference type="SUPFAM" id="SSF52016">
    <property type="entry name" value="LeuD/IlvD-like"/>
    <property type="match status" value="1"/>
</dbReference>
<dbReference type="PROSITE" id="PS00886">
    <property type="entry name" value="ILVD_EDD_1"/>
    <property type="match status" value="1"/>
</dbReference>
<dbReference type="PROSITE" id="PS00887">
    <property type="entry name" value="ILVD_EDD_2"/>
    <property type="match status" value="1"/>
</dbReference>
<sequence>MPAYRSRTSTHGRNMAGARGLWRATGMKDGDFGKPIIAVVNSFTQFVPGHVHLKDLGQLVAREIEKAGGVAKEFNTIAVDDGIAMGHDGMLYSLPSREIIADSVEYMVNAHCADAMVCISNCDKITPGMLMAAMRLNIPAVFVSGGPMEAGKVLLSTGEKKVDLIDAMIAAADDRVSDEDVKVMERSACPTCGSCSGMFTANSMNCLTEALGLALPGNGSVLATHADRERLFVEAGHLVVDLARRYYEQDDAGVLPRTIASFKAFENAMTLDISMGGSTNTVLHLLAAANEGEVPFTMADIDRLSRKVPVLCKVAPAVANIHMEDVHRAGGIMGILGELDRAGLIHTDLPTVHAPSMKDALERWDVTRTKAESVTTFYRAAPGGVPTQVAFSQSRRWDDLDTDRASGVIRDFEHAYSKDGGLAVLFGNIAEDGCIVKTAGVDASILKFTGPARIFESQDAAVEAILANGKIKAGDIVLIRYEGPRGGPGMQEMLYPTSYLKSKGLGKACALVTDGRFSGGSSGLSIGHVSPEAAEGGAIGLVEEGDTIEIDIPNRRIHLAISDEEMARRRAAMEAKGDAAWKPKDRQRVVSQALQAYAALTTSAARGAVRDVKSLRR</sequence>
<evidence type="ECO:0000255" key="1">
    <source>
        <dbReference type="HAMAP-Rule" id="MF_00012"/>
    </source>
</evidence>
<protein>
    <recommendedName>
        <fullName evidence="1">Dihydroxy-acid dehydratase</fullName>
        <shortName evidence="1">DAD</shortName>
        <ecNumber evidence="1">4.2.1.9</ecNumber>
    </recommendedName>
</protein>
<feature type="chain" id="PRO_1000070949" description="Dihydroxy-acid dehydratase">
    <location>
        <begin position="1"/>
        <end position="617"/>
    </location>
</feature>
<feature type="active site" description="Proton acceptor" evidence="1">
    <location>
        <position position="518"/>
    </location>
</feature>
<feature type="binding site" evidence="1">
    <location>
        <position position="81"/>
    </location>
    <ligand>
        <name>Mg(2+)</name>
        <dbReference type="ChEBI" id="CHEBI:18420"/>
    </ligand>
</feature>
<feature type="binding site" evidence="1">
    <location>
        <position position="122"/>
    </location>
    <ligand>
        <name>[2Fe-2S] cluster</name>
        <dbReference type="ChEBI" id="CHEBI:190135"/>
    </ligand>
</feature>
<feature type="binding site" evidence="1">
    <location>
        <position position="123"/>
    </location>
    <ligand>
        <name>Mg(2+)</name>
        <dbReference type="ChEBI" id="CHEBI:18420"/>
    </ligand>
</feature>
<feature type="binding site" description="via carbamate group" evidence="1">
    <location>
        <position position="124"/>
    </location>
    <ligand>
        <name>Mg(2+)</name>
        <dbReference type="ChEBI" id="CHEBI:18420"/>
    </ligand>
</feature>
<feature type="binding site" evidence="1">
    <location>
        <position position="195"/>
    </location>
    <ligand>
        <name>[2Fe-2S] cluster</name>
        <dbReference type="ChEBI" id="CHEBI:190135"/>
    </ligand>
</feature>
<feature type="binding site" evidence="1">
    <location>
        <position position="492"/>
    </location>
    <ligand>
        <name>Mg(2+)</name>
        <dbReference type="ChEBI" id="CHEBI:18420"/>
    </ligand>
</feature>
<feature type="modified residue" description="N6-carboxylysine" evidence="1">
    <location>
        <position position="124"/>
    </location>
</feature>
<name>ILVD_AZOC5</name>
<keyword id="KW-0001">2Fe-2S</keyword>
<keyword id="KW-0028">Amino-acid biosynthesis</keyword>
<keyword id="KW-0100">Branched-chain amino acid biosynthesis</keyword>
<keyword id="KW-0408">Iron</keyword>
<keyword id="KW-0411">Iron-sulfur</keyword>
<keyword id="KW-0456">Lyase</keyword>
<keyword id="KW-0460">Magnesium</keyword>
<keyword id="KW-0479">Metal-binding</keyword>
<keyword id="KW-1185">Reference proteome</keyword>
<gene>
    <name evidence="1" type="primary">ilvD</name>
    <name type="ordered locus">AZC_3530</name>
</gene>
<organism>
    <name type="scientific">Azorhizobium caulinodans (strain ATCC 43989 / DSM 5975 / JCM 20966 / LMG 6465 / NBRC 14845 / NCIMB 13405 / ORS 571)</name>
    <dbReference type="NCBI Taxonomy" id="438753"/>
    <lineage>
        <taxon>Bacteria</taxon>
        <taxon>Pseudomonadati</taxon>
        <taxon>Pseudomonadota</taxon>
        <taxon>Alphaproteobacteria</taxon>
        <taxon>Hyphomicrobiales</taxon>
        <taxon>Xanthobacteraceae</taxon>
        <taxon>Azorhizobium</taxon>
    </lineage>
</organism>
<comment type="function">
    <text evidence="1">Functions in the biosynthesis of branched-chain amino acids. Catalyzes the dehydration of (2R,3R)-2,3-dihydroxy-3-methylpentanoate (2,3-dihydroxy-3-methylvalerate) into 2-oxo-3-methylpentanoate (2-oxo-3-methylvalerate) and of (2R)-2,3-dihydroxy-3-methylbutanoate (2,3-dihydroxyisovalerate) into 2-oxo-3-methylbutanoate (2-oxoisovalerate), the penultimate precursor to L-isoleucine and L-valine, respectively.</text>
</comment>
<comment type="catalytic activity">
    <reaction evidence="1">
        <text>(2R)-2,3-dihydroxy-3-methylbutanoate = 3-methyl-2-oxobutanoate + H2O</text>
        <dbReference type="Rhea" id="RHEA:24809"/>
        <dbReference type="ChEBI" id="CHEBI:11851"/>
        <dbReference type="ChEBI" id="CHEBI:15377"/>
        <dbReference type="ChEBI" id="CHEBI:49072"/>
        <dbReference type="EC" id="4.2.1.9"/>
    </reaction>
    <physiologicalReaction direction="left-to-right" evidence="1">
        <dbReference type="Rhea" id="RHEA:24810"/>
    </physiologicalReaction>
</comment>
<comment type="catalytic activity">
    <reaction evidence="1">
        <text>(2R,3R)-2,3-dihydroxy-3-methylpentanoate = (S)-3-methyl-2-oxopentanoate + H2O</text>
        <dbReference type="Rhea" id="RHEA:27694"/>
        <dbReference type="ChEBI" id="CHEBI:15377"/>
        <dbReference type="ChEBI" id="CHEBI:35146"/>
        <dbReference type="ChEBI" id="CHEBI:49258"/>
        <dbReference type="EC" id="4.2.1.9"/>
    </reaction>
    <physiologicalReaction direction="left-to-right" evidence="1">
        <dbReference type="Rhea" id="RHEA:27695"/>
    </physiologicalReaction>
</comment>
<comment type="cofactor">
    <cofactor evidence="1">
        <name>[2Fe-2S] cluster</name>
        <dbReference type="ChEBI" id="CHEBI:190135"/>
    </cofactor>
    <text evidence="1">Binds 1 [2Fe-2S] cluster per subunit. This cluster acts as a Lewis acid cofactor.</text>
</comment>
<comment type="cofactor">
    <cofactor evidence="1">
        <name>Mg(2+)</name>
        <dbReference type="ChEBI" id="CHEBI:18420"/>
    </cofactor>
</comment>
<comment type="pathway">
    <text evidence="1">Amino-acid biosynthesis; L-isoleucine biosynthesis; L-isoleucine from 2-oxobutanoate: step 3/4.</text>
</comment>
<comment type="pathway">
    <text evidence="1">Amino-acid biosynthesis; L-valine biosynthesis; L-valine from pyruvate: step 3/4.</text>
</comment>
<comment type="subunit">
    <text evidence="1">Homodimer.</text>
</comment>
<comment type="similarity">
    <text evidence="1">Belongs to the IlvD/Edd family.</text>
</comment>
<proteinExistence type="inferred from homology"/>
<reference key="1">
    <citation type="submission" date="2007-04" db="EMBL/GenBank/DDBJ databases">
        <title>Complete genome sequence of the nitrogen-fixing bacterium Azorhizobium caulinodans ORS571.</title>
        <authorList>
            <person name="Lee K.B."/>
            <person name="Backer P.D."/>
            <person name="Aono T."/>
            <person name="Liu C.T."/>
            <person name="Suzuki S."/>
            <person name="Suzuki T."/>
            <person name="Kaneko T."/>
            <person name="Yamada M."/>
            <person name="Tabata S."/>
            <person name="Kupfer D.M."/>
            <person name="Najar F.Z."/>
            <person name="Wiley G.B."/>
            <person name="Roe B."/>
            <person name="Binnewies T."/>
            <person name="Ussery D."/>
            <person name="Vereecke D."/>
            <person name="Gevers D."/>
            <person name="Holsters M."/>
            <person name="Oyaizu H."/>
        </authorList>
    </citation>
    <scope>NUCLEOTIDE SEQUENCE [LARGE SCALE GENOMIC DNA]</scope>
    <source>
        <strain>ATCC 43989 / DSM 5975 / JCM 20966 / LMG 6465 / NBRC 14845 / NCIMB 13405 / ORS 571</strain>
    </source>
</reference>
<accession>A8IES7</accession>